<evidence type="ECO:0000255" key="1">
    <source>
        <dbReference type="HAMAP-Rule" id="MF_00592"/>
    </source>
</evidence>
<evidence type="ECO:0000305" key="2"/>
<proteinExistence type="inferred from homology"/>
<name>DEOC_VIBCH</name>
<gene>
    <name evidence="1" type="primary">deoC</name>
    <name type="ordered locus">VC_2350</name>
</gene>
<keyword id="KW-0963">Cytoplasm</keyword>
<keyword id="KW-0456">Lyase</keyword>
<keyword id="KW-1185">Reference proteome</keyword>
<keyword id="KW-0704">Schiff base</keyword>
<reference key="1">
    <citation type="journal article" date="2000" name="Nature">
        <title>DNA sequence of both chromosomes of the cholera pathogen Vibrio cholerae.</title>
        <authorList>
            <person name="Heidelberg J.F."/>
            <person name="Eisen J.A."/>
            <person name="Nelson W.C."/>
            <person name="Clayton R.A."/>
            <person name="Gwinn M.L."/>
            <person name="Dodson R.J."/>
            <person name="Haft D.H."/>
            <person name="Hickey E.K."/>
            <person name="Peterson J.D."/>
            <person name="Umayam L.A."/>
            <person name="Gill S.R."/>
            <person name="Nelson K.E."/>
            <person name="Read T.D."/>
            <person name="Tettelin H."/>
            <person name="Richardson D.L."/>
            <person name="Ermolaeva M.D."/>
            <person name="Vamathevan J.J."/>
            <person name="Bass S."/>
            <person name="Qin H."/>
            <person name="Dragoi I."/>
            <person name="Sellers P."/>
            <person name="McDonald L.A."/>
            <person name="Utterback T.R."/>
            <person name="Fleischmann R.D."/>
            <person name="Nierman W.C."/>
            <person name="White O."/>
            <person name="Salzberg S.L."/>
            <person name="Smith H.O."/>
            <person name="Colwell R.R."/>
            <person name="Mekalanos J.J."/>
            <person name="Venter J.C."/>
            <person name="Fraser C.M."/>
        </authorList>
    </citation>
    <scope>NUCLEOTIDE SEQUENCE [LARGE SCALE GENOMIC DNA]</scope>
    <source>
        <strain>ATCC 39315 / El Tor Inaba N16961</strain>
    </source>
</reference>
<dbReference type="EC" id="4.1.2.4" evidence="1"/>
<dbReference type="EMBL" id="AE003852">
    <property type="protein sequence ID" value="AAF95493.1"/>
    <property type="molecule type" value="Genomic_DNA"/>
</dbReference>
<dbReference type="PIR" id="F82087">
    <property type="entry name" value="F82087"/>
</dbReference>
<dbReference type="RefSeq" id="NP_231980.1">
    <property type="nucleotide sequence ID" value="NC_002505.1"/>
</dbReference>
<dbReference type="RefSeq" id="WP_001292544.1">
    <property type="nucleotide sequence ID" value="NZ_LT906614.1"/>
</dbReference>
<dbReference type="SMR" id="Q9KPL7"/>
<dbReference type="STRING" id="243277.VC_2350"/>
<dbReference type="DNASU" id="2613146"/>
<dbReference type="EnsemblBacteria" id="AAF95493">
    <property type="protein sequence ID" value="AAF95493"/>
    <property type="gene ID" value="VC_2350"/>
</dbReference>
<dbReference type="GeneID" id="94012993"/>
<dbReference type="KEGG" id="vch:VC_2350"/>
<dbReference type="PATRIC" id="fig|243277.26.peg.2237"/>
<dbReference type="eggNOG" id="COG0274">
    <property type="taxonomic scope" value="Bacteria"/>
</dbReference>
<dbReference type="HOGENOM" id="CLU_053595_3_1_6"/>
<dbReference type="UniPathway" id="UPA00002">
    <property type="reaction ID" value="UER00468"/>
</dbReference>
<dbReference type="Proteomes" id="UP000000584">
    <property type="component" value="Chromosome 1"/>
</dbReference>
<dbReference type="GO" id="GO:0005737">
    <property type="term" value="C:cytoplasm"/>
    <property type="evidence" value="ECO:0007669"/>
    <property type="project" value="UniProtKB-SubCell"/>
</dbReference>
<dbReference type="GO" id="GO:0004139">
    <property type="term" value="F:deoxyribose-phosphate aldolase activity"/>
    <property type="evidence" value="ECO:0000318"/>
    <property type="project" value="GO_Central"/>
</dbReference>
<dbReference type="GO" id="GO:0006018">
    <property type="term" value="P:2-deoxyribose 1-phosphate catabolic process"/>
    <property type="evidence" value="ECO:0007669"/>
    <property type="project" value="UniProtKB-UniRule"/>
</dbReference>
<dbReference type="GO" id="GO:0016052">
    <property type="term" value="P:carbohydrate catabolic process"/>
    <property type="evidence" value="ECO:0000318"/>
    <property type="project" value="GO_Central"/>
</dbReference>
<dbReference type="GO" id="GO:0009264">
    <property type="term" value="P:deoxyribonucleotide catabolic process"/>
    <property type="evidence" value="ECO:0000318"/>
    <property type="project" value="GO_Central"/>
</dbReference>
<dbReference type="CDD" id="cd00959">
    <property type="entry name" value="DeoC"/>
    <property type="match status" value="1"/>
</dbReference>
<dbReference type="FunFam" id="3.20.20.70:FF:000034">
    <property type="entry name" value="Deoxyribose-phosphate aldolase"/>
    <property type="match status" value="1"/>
</dbReference>
<dbReference type="Gene3D" id="3.20.20.70">
    <property type="entry name" value="Aldolase class I"/>
    <property type="match status" value="1"/>
</dbReference>
<dbReference type="HAMAP" id="MF_00592">
    <property type="entry name" value="DeoC_type2"/>
    <property type="match status" value="1"/>
</dbReference>
<dbReference type="InterPro" id="IPR013785">
    <property type="entry name" value="Aldolase_TIM"/>
</dbReference>
<dbReference type="InterPro" id="IPR011343">
    <property type="entry name" value="DeoC"/>
</dbReference>
<dbReference type="InterPro" id="IPR002915">
    <property type="entry name" value="DeoC/FbaB/LacD_aldolase"/>
</dbReference>
<dbReference type="InterPro" id="IPR023649">
    <property type="entry name" value="DeoC_typeII"/>
</dbReference>
<dbReference type="NCBIfam" id="TIGR00126">
    <property type="entry name" value="deoC"/>
    <property type="match status" value="1"/>
</dbReference>
<dbReference type="PANTHER" id="PTHR10889">
    <property type="entry name" value="DEOXYRIBOSE-PHOSPHATE ALDOLASE"/>
    <property type="match status" value="1"/>
</dbReference>
<dbReference type="PANTHER" id="PTHR10889:SF3">
    <property type="entry name" value="DEOXYRIBOSE-PHOSPHATE ALDOLASE"/>
    <property type="match status" value="1"/>
</dbReference>
<dbReference type="Pfam" id="PF01791">
    <property type="entry name" value="DeoC"/>
    <property type="match status" value="1"/>
</dbReference>
<dbReference type="PIRSF" id="PIRSF001357">
    <property type="entry name" value="DeoC"/>
    <property type="match status" value="1"/>
</dbReference>
<dbReference type="SMART" id="SM01133">
    <property type="entry name" value="DeoC"/>
    <property type="match status" value="1"/>
</dbReference>
<dbReference type="SUPFAM" id="SSF51569">
    <property type="entry name" value="Aldolase"/>
    <property type="match status" value="1"/>
</dbReference>
<protein>
    <recommendedName>
        <fullName evidence="1">Deoxyribose-phosphate aldolase</fullName>
        <shortName evidence="1">DERA</shortName>
        <ecNumber evidence="1">4.1.2.4</ecNumber>
    </recommendedName>
    <alternativeName>
        <fullName evidence="1">2-deoxy-D-ribose 5-phosphate aldolase</fullName>
    </alternativeName>
    <alternativeName>
        <fullName evidence="1">Phosphodeoxyriboaldolase</fullName>
        <shortName evidence="1">Deoxyriboaldolase</shortName>
    </alternativeName>
</protein>
<sequence length="259" mass="27959">MSELKVAALRALKLMDLTTLNDNDTDAKVIQLCHDAKSPVGNTAAICIYPRFIPIAKKTLREQGTPEIRIATVTNFPHGNDDIEIAVAETKAAVAYGADEVDVVFPYRALIAGNEQVGFDLVKQCKAACGDKVLLKVIIETGELKQEALIKKASQICIEAGADFIKTSTGKVPVNATPEYARMMLEVIRDMGVAKTVGFKPAGGVRTAEDAQQYLAMADEILGGDWADSRHYRFGASSLLTNLLNTLEVTDQKADPAAY</sequence>
<organism>
    <name type="scientific">Vibrio cholerae serotype O1 (strain ATCC 39315 / El Tor Inaba N16961)</name>
    <dbReference type="NCBI Taxonomy" id="243277"/>
    <lineage>
        <taxon>Bacteria</taxon>
        <taxon>Pseudomonadati</taxon>
        <taxon>Pseudomonadota</taxon>
        <taxon>Gammaproteobacteria</taxon>
        <taxon>Vibrionales</taxon>
        <taxon>Vibrionaceae</taxon>
        <taxon>Vibrio</taxon>
    </lineage>
</organism>
<comment type="function">
    <text evidence="1">Catalyzes a reversible aldol reaction between acetaldehyde and D-glyceraldehyde 3-phosphate to generate 2-deoxy-D-ribose 5-phosphate.</text>
</comment>
<comment type="catalytic activity">
    <reaction evidence="1">
        <text>2-deoxy-D-ribose 5-phosphate = D-glyceraldehyde 3-phosphate + acetaldehyde</text>
        <dbReference type="Rhea" id="RHEA:12821"/>
        <dbReference type="ChEBI" id="CHEBI:15343"/>
        <dbReference type="ChEBI" id="CHEBI:59776"/>
        <dbReference type="ChEBI" id="CHEBI:62877"/>
        <dbReference type="EC" id="4.1.2.4"/>
    </reaction>
</comment>
<comment type="pathway">
    <text evidence="1">Carbohydrate degradation; 2-deoxy-D-ribose 1-phosphate degradation; D-glyceraldehyde 3-phosphate and acetaldehyde from 2-deoxy-alpha-D-ribose 1-phosphate: step 2/2.</text>
</comment>
<comment type="subcellular location">
    <subcellularLocation>
        <location evidence="1">Cytoplasm</location>
    </subcellularLocation>
</comment>
<comment type="similarity">
    <text evidence="1 2">Belongs to the DeoC/FbaB aldolase family. DeoC type 2 subfamily.</text>
</comment>
<feature type="chain" id="PRO_0000057305" description="Deoxyribose-phosphate aldolase">
    <location>
        <begin position="1"/>
        <end position="259"/>
    </location>
</feature>
<feature type="active site" description="Proton donor/acceptor" evidence="1">
    <location>
        <position position="102"/>
    </location>
</feature>
<feature type="active site" description="Schiff-base intermediate with acetaldehyde" evidence="1">
    <location>
        <position position="166"/>
    </location>
</feature>
<feature type="active site" description="Proton donor/acceptor" evidence="1">
    <location>
        <position position="200"/>
    </location>
</feature>
<accession>Q9KPL7</accession>